<comment type="function">
    <text evidence="1">Involved in the gluconeogenesis. Catalyzes stereospecifically the conversion of dihydroxyacetone phosphate (DHAP) to D-glyceraldehyde-3-phosphate (G3P).</text>
</comment>
<comment type="catalytic activity">
    <reaction evidence="1">
        <text>D-glyceraldehyde 3-phosphate = dihydroxyacetone phosphate</text>
        <dbReference type="Rhea" id="RHEA:18585"/>
        <dbReference type="ChEBI" id="CHEBI:57642"/>
        <dbReference type="ChEBI" id="CHEBI:59776"/>
        <dbReference type="EC" id="5.3.1.1"/>
    </reaction>
</comment>
<comment type="pathway">
    <text evidence="1">Carbohydrate biosynthesis; gluconeogenesis.</text>
</comment>
<comment type="pathway">
    <text evidence="1">Carbohydrate degradation; glycolysis; D-glyceraldehyde 3-phosphate from glycerone phosphate: step 1/1.</text>
</comment>
<comment type="subunit">
    <text evidence="1">Homotetramer; dimer of dimers.</text>
</comment>
<comment type="subcellular location">
    <subcellularLocation>
        <location evidence="1">Cytoplasm</location>
    </subcellularLocation>
</comment>
<comment type="similarity">
    <text evidence="1">Belongs to the triosephosphate isomerase family.</text>
</comment>
<accession>A4WIJ6</accession>
<keyword id="KW-0963">Cytoplasm</keyword>
<keyword id="KW-0312">Gluconeogenesis</keyword>
<keyword id="KW-0324">Glycolysis</keyword>
<keyword id="KW-0413">Isomerase</keyword>
<evidence type="ECO:0000255" key="1">
    <source>
        <dbReference type="HAMAP-Rule" id="MF_00147"/>
    </source>
</evidence>
<name>TPIS_PYRAR</name>
<gene>
    <name evidence="1" type="primary">tpiA</name>
    <name type="ordered locus">Pars_0622</name>
</gene>
<protein>
    <recommendedName>
        <fullName evidence="1">Triosephosphate isomerase</fullName>
        <shortName evidence="1">TIM</shortName>
        <shortName evidence="1">TPI</shortName>
        <ecNumber evidence="1">5.3.1.1</ecNumber>
    </recommendedName>
    <alternativeName>
        <fullName evidence="1">Triose-phosphate isomerase</fullName>
    </alternativeName>
</protein>
<dbReference type="EC" id="5.3.1.1" evidence="1"/>
<dbReference type="EMBL" id="CP000660">
    <property type="protein sequence ID" value="ABP50213.1"/>
    <property type="molecule type" value="Genomic_DNA"/>
</dbReference>
<dbReference type="SMR" id="A4WIJ6"/>
<dbReference type="STRING" id="340102.Pars_0622"/>
<dbReference type="KEGG" id="pas:Pars_0622"/>
<dbReference type="HOGENOM" id="CLU_104921_0_0_2"/>
<dbReference type="OrthoDB" id="9465at2157"/>
<dbReference type="PhylomeDB" id="A4WIJ6"/>
<dbReference type="UniPathway" id="UPA00109">
    <property type="reaction ID" value="UER00189"/>
</dbReference>
<dbReference type="UniPathway" id="UPA00138"/>
<dbReference type="Proteomes" id="UP000001567">
    <property type="component" value="Chromosome"/>
</dbReference>
<dbReference type="GO" id="GO:0005829">
    <property type="term" value="C:cytosol"/>
    <property type="evidence" value="ECO:0007669"/>
    <property type="project" value="TreeGrafter"/>
</dbReference>
<dbReference type="GO" id="GO:0004807">
    <property type="term" value="F:triose-phosphate isomerase activity"/>
    <property type="evidence" value="ECO:0007669"/>
    <property type="project" value="UniProtKB-UniRule"/>
</dbReference>
<dbReference type="GO" id="GO:0006094">
    <property type="term" value="P:gluconeogenesis"/>
    <property type="evidence" value="ECO:0007669"/>
    <property type="project" value="UniProtKB-UniRule"/>
</dbReference>
<dbReference type="GO" id="GO:0046166">
    <property type="term" value="P:glyceraldehyde-3-phosphate biosynthetic process"/>
    <property type="evidence" value="ECO:0007669"/>
    <property type="project" value="TreeGrafter"/>
</dbReference>
<dbReference type="GO" id="GO:0019563">
    <property type="term" value="P:glycerol catabolic process"/>
    <property type="evidence" value="ECO:0007669"/>
    <property type="project" value="TreeGrafter"/>
</dbReference>
<dbReference type="GO" id="GO:0006096">
    <property type="term" value="P:glycolytic process"/>
    <property type="evidence" value="ECO:0007669"/>
    <property type="project" value="UniProtKB-UniRule"/>
</dbReference>
<dbReference type="CDD" id="cd00311">
    <property type="entry name" value="TIM"/>
    <property type="match status" value="1"/>
</dbReference>
<dbReference type="FunFam" id="3.20.20.70:FF:000223">
    <property type="entry name" value="Triosephosphate isomerase"/>
    <property type="match status" value="1"/>
</dbReference>
<dbReference type="Gene3D" id="3.20.20.70">
    <property type="entry name" value="Aldolase class I"/>
    <property type="match status" value="1"/>
</dbReference>
<dbReference type="HAMAP" id="MF_00147_A">
    <property type="entry name" value="TIM_A"/>
    <property type="match status" value="1"/>
</dbReference>
<dbReference type="InterPro" id="IPR013785">
    <property type="entry name" value="Aldolase_TIM"/>
</dbReference>
<dbReference type="InterPro" id="IPR035990">
    <property type="entry name" value="TIM_sf"/>
</dbReference>
<dbReference type="InterPro" id="IPR000652">
    <property type="entry name" value="Triosephosphate_isomerase"/>
</dbReference>
<dbReference type="InterPro" id="IPR022891">
    <property type="entry name" value="Triosephosphate_isomerase_arc"/>
</dbReference>
<dbReference type="InterPro" id="IPR020861">
    <property type="entry name" value="Triosephosphate_isomerase_AS"/>
</dbReference>
<dbReference type="NCBIfam" id="NF003302">
    <property type="entry name" value="PRK04302.1"/>
    <property type="match status" value="1"/>
</dbReference>
<dbReference type="NCBIfam" id="TIGR00419">
    <property type="entry name" value="tim"/>
    <property type="match status" value="1"/>
</dbReference>
<dbReference type="PANTHER" id="PTHR21139">
    <property type="entry name" value="TRIOSEPHOSPHATE ISOMERASE"/>
    <property type="match status" value="1"/>
</dbReference>
<dbReference type="PANTHER" id="PTHR21139:SF42">
    <property type="entry name" value="TRIOSEPHOSPHATE ISOMERASE"/>
    <property type="match status" value="1"/>
</dbReference>
<dbReference type="Pfam" id="PF00121">
    <property type="entry name" value="TIM"/>
    <property type="match status" value="1"/>
</dbReference>
<dbReference type="SUPFAM" id="SSF51351">
    <property type="entry name" value="Triosephosphate isomerase (TIM)"/>
    <property type="match status" value="1"/>
</dbReference>
<dbReference type="PROSITE" id="PS00171">
    <property type="entry name" value="TIM_1"/>
    <property type="match status" value="1"/>
</dbReference>
<dbReference type="PROSITE" id="PS51440">
    <property type="entry name" value="TIM_2"/>
    <property type="match status" value="1"/>
</dbReference>
<feature type="chain" id="PRO_0000307608" description="Triosephosphate isomerase">
    <location>
        <begin position="1"/>
        <end position="224"/>
    </location>
</feature>
<feature type="active site" description="Electrophile" evidence="1">
    <location>
        <position position="93"/>
    </location>
</feature>
<feature type="active site" description="Proton acceptor" evidence="1">
    <location>
        <position position="141"/>
    </location>
</feature>
<feature type="binding site" evidence="1">
    <location>
        <begin position="9"/>
        <end position="11"/>
    </location>
    <ligand>
        <name>substrate</name>
    </ligand>
</feature>
<feature type="binding site" evidence="1">
    <location>
        <position position="146"/>
    </location>
    <ligand>
        <name>substrate</name>
    </ligand>
</feature>
<feature type="binding site" evidence="1">
    <location>
        <position position="181"/>
    </location>
    <ligand>
        <name>substrate</name>
    </ligand>
</feature>
<feature type="binding site" evidence="1">
    <location>
        <begin position="202"/>
        <end position="203"/>
    </location>
    <ligand>
        <name>substrate</name>
    </ligand>
</feature>
<proteinExistence type="inferred from homology"/>
<reference key="1">
    <citation type="submission" date="2007-04" db="EMBL/GenBank/DDBJ databases">
        <title>Complete sequence of Pyrobaculum arsenaticum DSM 13514.</title>
        <authorList>
            <consortium name="US DOE Joint Genome Institute"/>
            <person name="Copeland A."/>
            <person name="Lucas S."/>
            <person name="Lapidus A."/>
            <person name="Barry K."/>
            <person name="Glavina del Rio T."/>
            <person name="Dalin E."/>
            <person name="Tice H."/>
            <person name="Pitluck S."/>
            <person name="Chain P."/>
            <person name="Malfatti S."/>
            <person name="Shin M."/>
            <person name="Vergez L."/>
            <person name="Schmutz J."/>
            <person name="Larimer F."/>
            <person name="Land M."/>
            <person name="Hauser L."/>
            <person name="Kyrpides N."/>
            <person name="Mikhailova N."/>
            <person name="Cozen A.E."/>
            <person name="Fitz-Gibbon S.T."/>
            <person name="House C.H."/>
            <person name="Saltikov C."/>
            <person name="Lowe T.M."/>
            <person name="Richardson P."/>
        </authorList>
    </citation>
    <scope>NUCLEOTIDE SEQUENCE [LARGE SCALE GENOMIC DNA]</scope>
    <source>
        <strain>ATCC 700994 / DSM 13514 / JCM 11321 / PZ6</strain>
    </source>
</reference>
<organism>
    <name type="scientific">Pyrobaculum arsenaticum (strain DSM 13514 / JCM 11321 / PZ6)</name>
    <dbReference type="NCBI Taxonomy" id="340102"/>
    <lineage>
        <taxon>Archaea</taxon>
        <taxon>Thermoproteota</taxon>
        <taxon>Thermoprotei</taxon>
        <taxon>Thermoproteales</taxon>
        <taxon>Thermoproteaceae</taxon>
        <taxon>Pyrobaculum</taxon>
    </lineage>
</organism>
<sequence length="224" mass="23331">MKFPVLILNFKAYAEAAGRRAVEIAKAAERVAKELGVNIAVAPNHLELALVAQSVEIPVYAQGVDVESPGAHTAHVALGNLKEAGAAGVILNHSEAPLRLNELARYVGKARELGLDVVVCAPDPTTSLAAAALGPHAVAVEPPELIGTGRAVSRYKPETVVQTVQLVAKHFADVAVITGAGIESGEDVEAALRLGTRGVLLASAAVKAKDHYQKIMELAKPLLK</sequence>